<gene>
    <name type="primary">28</name>
</gene>
<organism>
    <name type="scientific">Enterobacteria phage T4</name>
    <name type="common">Bacteriophage T4</name>
    <dbReference type="NCBI Taxonomy" id="10665"/>
    <lineage>
        <taxon>Viruses</taxon>
        <taxon>Duplodnaviria</taxon>
        <taxon>Heunggongvirae</taxon>
        <taxon>Uroviricota</taxon>
        <taxon>Caudoviricetes</taxon>
        <taxon>Straboviridae</taxon>
        <taxon>Tevenvirinae</taxon>
        <taxon>Tequatrovirus</taxon>
    </lineage>
</organism>
<feature type="chain" id="PRO_0000165016" description="Baseplate hub assembly protein gp28">
    <location>
        <begin position="1"/>
        <end position="177"/>
    </location>
</feature>
<evidence type="ECO:0000269" key="1">
    <source>
    </source>
</evidence>
<evidence type="ECO:0000303" key="2">
    <source>
    </source>
</evidence>
<evidence type="ECO:0000305" key="3">
    <source>
    </source>
</evidence>
<evidence type="ECO:0000305" key="4">
    <source>
    </source>
</evidence>
<evidence type="ECO:0000305" key="5">
    <source>
    </source>
</evidence>
<keyword id="KW-0426">Late protein</keyword>
<keyword id="KW-1185">Reference proteome</keyword>
<keyword id="KW-1188">Viral release from host cell</keyword>
<keyword id="KW-1245">Viral tail assembly</keyword>
<accession>P13336</accession>
<accession>Q9T0T7</accession>
<reference key="1">
    <citation type="journal article" date="1995" name="DNA Seq.">
        <title>Bacteriophage T4 gene 28.</title>
        <authorList>
            <person name="Bova R."/>
            <person name="Cascino A."/>
            <person name="Cipollaro M."/>
            <person name="Gargano S."/>
            <person name="Grau O."/>
            <person name="Micheli M.R."/>
            <person name="Santoro M."/>
            <person name="Scarlato V."/>
            <person name="Storlazzi A."/>
        </authorList>
    </citation>
    <scope>NUCLEOTIDE SEQUENCE [GENOMIC DNA]</scope>
</reference>
<reference key="2">
    <citation type="journal article" date="2003" name="Microbiol. Mol. Biol. Rev.">
        <title>Bacteriophage T4 genome.</title>
        <authorList>
            <person name="Miller E.S."/>
            <person name="Kutter E."/>
            <person name="Mosig G."/>
            <person name="Arisaka F."/>
            <person name="Kunisawa T."/>
            <person name="Ruger W."/>
        </authorList>
    </citation>
    <scope>NUCLEOTIDE SEQUENCE [LARGE SCALE GENOMIC DNA]</scope>
</reference>
<reference key="3">
    <citation type="journal article" date="1988" name="Virology">
        <title>The structure of three bacteriophage T4 genes required for tail-tube assembly.</title>
        <authorList>
            <person name="Ishimoto L.K."/>
            <person name="Ishimoto K.S."/>
            <person name="Cascino A."/>
            <person name="Cipollaro M."/>
            <person name="Eiserling F.A."/>
        </authorList>
    </citation>
    <scope>NUCLEOTIDE SEQUENCE [GENOMIC DNA] OF 168-177</scope>
</reference>
<reference key="4">
    <citation type="journal article" date="1990" name="J. Virol.">
        <title>Structure of the bacteriophage T4 baseplate as determined by chemical cross-linking.</title>
        <authorList>
            <person name="Watts N.R."/>
            <person name="Coombs D.H."/>
        </authorList>
    </citation>
    <scope>SUBUNIT</scope>
</reference>
<reference key="5">
    <citation type="journal article" date="1999" name="Acta Microbiol. Pol.">
        <title>Evidence of interactions between Gp27 and Gp28 constituents of the central part of bacteriophage T4 baseplate.</title>
        <authorList>
            <person name="Nieradko J."/>
            <person name="Koszalka P."/>
        </authorList>
    </citation>
    <scope>FUNCTION</scope>
    <scope>INTERACTION WITH GP27</scope>
</reference>
<reference key="6">
    <citation type="journal article" date="2003" name="Cell. Mol. Life Sci.">
        <title>Structure and morphogenesis of bacteriophage T4.</title>
        <authorList>
            <person name="Leiman P.G."/>
            <person name="Kanamaru S."/>
            <person name="Mesyanzhinov V.V."/>
            <person name="Arisaka F."/>
            <person name="Rossmann M.G."/>
        </authorList>
    </citation>
    <scope>REVIEW ON FUNCTION</scope>
</reference>
<reference key="7">
    <citation type="journal article" date="2010" name="Virol. J.">
        <title>Morphogenesis of the T4 tail and tail fibers.</title>
        <authorList>
            <person name="Leiman P.G."/>
            <person name="Arisaka F."/>
            <person name="van Raaij M.J."/>
            <person name="Kostyuchenko V.A."/>
            <person name="Aksyuk A.A."/>
            <person name="Kanamaru S."/>
            <person name="Rossmann M.G."/>
        </authorList>
    </citation>
    <scope>REVIEW ON FUNCTION</scope>
</reference>
<name>GP28_BPT4</name>
<protein>
    <recommendedName>
        <fullName>Baseplate hub assembly protein gp28</fullName>
    </recommendedName>
    <alternativeName>
        <fullName>Gene product 28</fullName>
        <shortName>gp28</shortName>
    </alternativeName>
</protein>
<sequence>MNLNLILPLKKVVLPISNKEVSIPKMGLKHYNILKDVKGPDENLKLLIDSICPNLSPAEVDFVSIHLLEFNGKIKSRKEIDGYTYDINDVYVCQRLEFQYQGNTFYFRPPGKFEQFLTVSDMLSKCLLRVNDEVKEINFLEMPAFVLKWANDIFTTLAIPGPNGPITGIGNIIGLFE</sequence>
<organismHost>
    <name type="scientific">Escherichia coli</name>
    <dbReference type="NCBI Taxonomy" id="562"/>
</organismHost>
<comment type="function">
    <text evidence="1 2">Baseplate hub assembly chaperone involved in the tail assembly.</text>
</comment>
<comment type="subunit">
    <text evidence="3 4 5">The gp27 and gp28 proteins seem to combine to form a small hub precursor during morphogenesis.</text>
</comment>
<proteinExistence type="evidence at protein level"/>
<dbReference type="EMBL" id="X56651">
    <property type="protein sequence ID" value="CAA39973.1"/>
    <property type="molecule type" value="Genomic_DNA"/>
</dbReference>
<dbReference type="EMBL" id="AF158101">
    <property type="protein sequence ID" value="AAD42436.2"/>
    <property type="molecule type" value="Genomic_DNA"/>
</dbReference>
<dbReference type="EMBL" id="M20298">
    <property type="protein sequence ID" value="AAA32537.2"/>
    <property type="molecule type" value="Genomic_DNA"/>
</dbReference>
<dbReference type="PIR" id="S25492">
    <property type="entry name" value="S25492"/>
</dbReference>
<dbReference type="RefSeq" id="NP_049804.2">
    <property type="nucleotide sequence ID" value="NC_000866.4"/>
</dbReference>
<dbReference type="TCDB" id="1.K.1.1.1">
    <property type="family name" value="the gp27/5 t4-baseplate (t4-bp) family"/>
</dbReference>
<dbReference type="GeneID" id="1258697"/>
<dbReference type="KEGG" id="vg:1258697"/>
<dbReference type="OrthoDB" id="20033at10239"/>
<dbReference type="Proteomes" id="UP000009087">
    <property type="component" value="Segment"/>
</dbReference>
<dbReference type="GO" id="GO:0098003">
    <property type="term" value="P:viral tail assembly"/>
    <property type="evidence" value="ECO:0007669"/>
    <property type="project" value="UniProtKB-KW"/>
</dbReference>
<dbReference type="InterPro" id="IPR024342">
    <property type="entry name" value="Phage_T4_Gp28"/>
</dbReference>
<dbReference type="Pfam" id="PF11110">
    <property type="entry name" value="Phage_hub_GP28"/>
    <property type="match status" value="1"/>
</dbReference>